<comment type="function">
    <text evidence="1 2">Involved in the catabolism of short chain fatty acids (SCFA) via the 2-methylcitrate cycle I (propionate degradation route). Catalyzes the thermodynamically favored C-C bond cleavage of (2R,3S)-2-methylisocitrate to yield pyruvate and succinate via an alpha-carboxy-carbanion intermediate.</text>
</comment>
<comment type="catalytic activity">
    <reaction evidence="1">
        <text>(2S,3R)-3-hydroxybutane-1,2,3-tricarboxylate = pyruvate + succinate</text>
        <dbReference type="Rhea" id="RHEA:16809"/>
        <dbReference type="ChEBI" id="CHEBI:15361"/>
        <dbReference type="ChEBI" id="CHEBI:30031"/>
        <dbReference type="ChEBI" id="CHEBI:57429"/>
        <dbReference type="EC" id="4.1.3.30"/>
    </reaction>
</comment>
<comment type="cofactor">
    <cofactor evidence="1">
        <name>Mg(2+)</name>
        <dbReference type="ChEBI" id="CHEBI:18420"/>
    </cofactor>
</comment>
<comment type="pathway">
    <text evidence="1">Organic acid metabolism; propanoate degradation.</text>
</comment>
<comment type="subunit">
    <text evidence="1">Homotetramer; dimer of dimers.</text>
</comment>
<comment type="similarity">
    <text evidence="1">Belongs to the isocitrate lyase/PEP mutase superfamily. Methylisocitrate lyase family.</text>
</comment>
<dbReference type="EC" id="4.1.3.30" evidence="1"/>
<dbReference type="EMBL" id="AE014299">
    <property type="protein sequence ID" value="AAN53430.1"/>
    <property type="molecule type" value="Genomic_DNA"/>
</dbReference>
<dbReference type="RefSeq" id="NP_715985.1">
    <property type="nucleotide sequence ID" value="NC_004347.2"/>
</dbReference>
<dbReference type="RefSeq" id="WP_011070710.1">
    <property type="nucleotide sequence ID" value="NC_004347.2"/>
</dbReference>
<dbReference type="SMR" id="Q8EJW1"/>
<dbReference type="STRING" id="211586.SO_0345"/>
<dbReference type="PaxDb" id="211586-SO_0345"/>
<dbReference type="KEGG" id="son:SO_0345"/>
<dbReference type="PATRIC" id="fig|211586.12.peg.335"/>
<dbReference type="eggNOG" id="COG2513">
    <property type="taxonomic scope" value="Bacteria"/>
</dbReference>
<dbReference type="HOGENOM" id="CLU_027389_3_2_6"/>
<dbReference type="OrthoDB" id="9771433at2"/>
<dbReference type="PhylomeDB" id="Q8EJW1"/>
<dbReference type="BioCyc" id="SONE211586:G1GMP-330-MONOMER"/>
<dbReference type="UniPathway" id="UPA00946"/>
<dbReference type="Proteomes" id="UP000008186">
    <property type="component" value="Chromosome"/>
</dbReference>
<dbReference type="GO" id="GO:0000287">
    <property type="term" value="F:magnesium ion binding"/>
    <property type="evidence" value="ECO:0000250"/>
    <property type="project" value="UniProtKB"/>
</dbReference>
<dbReference type="GO" id="GO:0046421">
    <property type="term" value="F:methylisocitrate lyase activity"/>
    <property type="evidence" value="ECO:0000314"/>
    <property type="project" value="UniProtKB"/>
</dbReference>
<dbReference type="GO" id="GO:0019629">
    <property type="term" value="P:propionate catabolic process, 2-methylcitrate cycle"/>
    <property type="evidence" value="ECO:0000250"/>
    <property type="project" value="UniProtKB"/>
</dbReference>
<dbReference type="CDD" id="cd00377">
    <property type="entry name" value="ICL_PEPM"/>
    <property type="match status" value="1"/>
</dbReference>
<dbReference type="FunFam" id="3.20.20.60:FF:000009">
    <property type="entry name" value="2-methylisocitrate lyase"/>
    <property type="match status" value="1"/>
</dbReference>
<dbReference type="Gene3D" id="3.20.20.60">
    <property type="entry name" value="Phosphoenolpyruvate-binding domains"/>
    <property type="match status" value="1"/>
</dbReference>
<dbReference type="HAMAP" id="MF_01939">
    <property type="entry name" value="PrpB"/>
    <property type="match status" value="1"/>
</dbReference>
<dbReference type="InterPro" id="IPR039556">
    <property type="entry name" value="ICL/PEPM"/>
</dbReference>
<dbReference type="InterPro" id="IPR018523">
    <property type="entry name" value="Isocitrate_lyase_ph_CS"/>
</dbReference>
<dbReference type="InterPro" id="IPR012695">
    <property type="entry name" value="PrpB"/>
</dbReference>
<dbReference type="InterPro" id="IPR015813">
    <property type="entry name" value="Pyrv/PenolPyrv_kinase-like_dom"/>
</dbReference>
<dbReference type="InterPro" id="IPR040442">
    <property type="entry name" value="Pyrv_kinase-like_dom_sf"/>
</dbReference>
<dbReference type="NCBIfam" id="NF008455">
    <property type="entry name" value="PRK11320.1"/>
    <property type="match status" value="1"/>
</dbReference>
<dbReference type="NCBIfam" id="TIGR02317">
    <property type="entry name" value="prpB"/>
    <property type="match status" value="1"/>
</dbReference>
<dbReference type="PANTHER" id="PTHR42905:SF5">
    <property type="entry name" value="CARBOXYVINYL-CARBOXYPHOSPHONATE PHOSPHORYLMUTASE, CHLOROPLASTIC"/>
    <property type="match status" value="1"/>
</dbReference>
<dbReference type="PANTHER" id="PTHR42905">
    <property type="entry name" value="PHOSPHOENOLPYRUVATE CARBOXYLASE"/>
    <property type="match status" value="1"/>
</dbReference>
<dbReference type="Pfam" id="PF13714">
    <property type="entry name" value="PEP_mutase"/>
    <property type="match status" value="1"/>
</dbReference>
<dbReference type="SUPFAM" id="SSF51621">
    <property type="entry name" value="Phosphoenolpyruvate/pyruvate domain"/>
    <property type="match status" value="1"/>
</dbReference>
<dbReference type="PROSITE" id="PS00161">
    <property type="entry name" value="ISOCITRATE_LYASE"/>
    <property type="match status" value="1"/>
</dbReference>
<feature type="chain" id="PRO_0000432932" description="2-methylisocitrate lyase">
    <location>
        <begin position="1"/>
        <end position="292"/>
    </location>
</feature>
<feature type="binding site" evidence="1">
    <location>
        <begin position="44"/>
        <end position="46"/>
    </location>
    <ligand>
        <name>substrate</name>
    </ligand>
</feature>
<feature type="binding site" evidence="1">
    <location>
        <position position="84"/>
    </location>
    <ligand>
        <name>Mg(2+)</name>
        <dbReference type="ChEBI" id="CHEBI:18420"/>
    </ligand>
</feature>
<feature type="binding site" evidence="1">
    <location>
        <position position="86"/>
    </location>
    <ligand>
        <name>Mg(2+)</name>
        <dbReference type="ChEBI" id="CHEBI:18420"/>
    </ligand>
</feature>
<feature type="binding site" evidence="1">
    <location>
        <begin position="121"/>
        <end position="122"/>
    </location>
    <ligand>
        <name>substrate</name>
    </ligand>
</feature>
<feature type="binding site" evidence="1">
    <location>
        <position position="156"/>
    </location>
    <ligand>
        <name>substrate</name>
    </ligand>
</feature>
<feature type="binding site" evidence="1">
    <location>
        <position position="186"/>
    </location>
    <ligand>
        <name>substrate</name>
    </ligand>
</feature>
<feature type="binding site" evidence="1">
    <location>
        <begin position="208"/>
        <end position="210"/>
    </location>
    <ligand>
        <name>substrate</name>
    </ligand>
</feature>
<feature type="binding site" evidence="1">
    <location>
        <position position="239"/>
    </location>
    <ligand>
        <name>substrate</name>
    </ligand>
</feature>
<feature type="binding site" evidence="1">
    <location>
        <position position="268"/>
    </location>
    <ligand>
        <name>substrate</name>
    </ligand>
</feature>
<reference key="1">
    <citation type="journal article" date="2002" name="Nat. Biotechnol.">
        <title>Genome sequence of the dissimilatory metal ion-reducing bacterium Shewanella oneidensis.</title>
        <authorList>
            <person name="Heidelberg J.F."/>
            <person name="Paulsen I.T."/>
            <person name="Nelson K.E."/>
            <person name="Gaidos E.J."/>
            <person name="Nelson W.C."/>
            <person name="Read T.D."/>
            <person name="Eisen J.A."/>
            <person name="Seshadri R."/>
            <person name="Ward N.L."/>
            <person name="Methe B.A."/>
            <person name="Clayton R.A."/>
            <person name="Meyer T."/>
            <person name="Tsapin A."/>
            <person name="Scott J."/>
            <person name="Beanan M.J."/>
            <person name="Brinkac L.M."/>
            <person name="Daugherty S.C."/>
            <person name="DeBoy R.T."/>
            <person name="Dodson R.J."/>
            <person name="Durkin A.S."/>
            <person name="Haft D.H."/>
            <person name="Kolonay J.F."/>
            <person name="Madupu R."/>
            <person name="Peterson J.D."/>
            <person name="Umayam L.A."/>
            <person name="White O."/>
            <person name="Wolf A.M."/>
            <person name="Vamathevan J.J."/>
            <person name="Weidman J.F."/>
            <person name="Impraim M."/>
            <person name="Lee K."/>
            <person name="Berry K.J."/>
            <person name="Lee C."/>
            <person name="Mueller J."/>
            <person name="Khouri H.M."/>
            <person name="Gill J."/>
            <person name="Utterback T.R."/>
            <person name="McDonald L.A."/>
            <person name="Feldblyum T.V."/>
            <person name="Smith H.O."/>
            <person name="Venter J.C."/>
            <person name="Nealson K.H."/>
            <person name="Fraser C.M."/>
        </authorList>
    </citation>
    <scope>NUCLEOTIDE SEQUENCE [LARGE SCALE GENOMIC DNA]</scope>
    <source>
        <strain>ATCC 700550 / JCM 31522 / CIP 106686 / LMG 19005 / NCIMB 14063 / MR-1</strain>
    </source>
</reference>
<reference key="2">
    <citation type="journal article" date="2004" name="J. Bacteriol.">
        <title>The acnD genes of Shewenella oneidensis and Vibrio cholerae encode a new Fe/S-dependent 2-methylcitrate dehydratase enzyme that requires prpF function in vivo.</title>
        <authorList>
            <person name="Grimek T.L."/>
            <person name="Escalante-Semerena J.C."/>
        </authorList>
    </citation>
    <scope>FUNCTION</scope>
    <source>
        <strain>ATCC 700550 / JCM 31522 / CIP 106686 / LMG 19005 / NCIMB 14063 / MR-1</strain>
    </source>
</reference>
<gene>
    <name evidence="1" type="primary">prpB</name>
    <name type="ordered locus">SO_0345</name>
</gene>
<protein>
    <recommendedName>
        <fullName evidence="3">2-methylisocitrate lyase</fullName>
        <shortName evidence="1">2-MIC</shortName>
        <shortName evidence="1">MICL</shortName>
        <ecNumber evidence="1">4.1.3.30</ecNumber>
    </recommendedName>
    <alternativeName>
        <fullName evidence="1">(2R,3S)-2-methylisocitrate lyase</fullName>
    </alternativeName>
</protein>
<name>PRPB_SHEON</name>
<keyword id="KW-0456">Lyase</keyword>
<keyword id="KW-0460">Magnesium</keyword>
<keyword id="KW-0479">Metal-binding</keyword>
<keyword id="KW-1185">Reference proteome</keyword>
<proteinExistence type="inferred from homology"/>
<sequence>MTQSAGLRFRQALANSKPLQIVGTTNAYFALMAEQTGFQALYLSGAGVANASYGLPDLGMTSMNDVLIDAGRITSATQLPLLVDIDTGWGGAFNIARTIKEFEKIGVAAVHMEDQVSQKRCGHRPNKAVVSTEEMVDRIKAAVDARTDPNFVIMARTDAVAVEGLEAGIERAKAYIAAGADMIFAEALTELDQYRHFKAQVKAPILANMTEFGQTQLFNKEELAQAGADMVLYPLGTFRAANQAALKVMQALMNDGHQRNVLDTMQTRADLYKYLGYHAFEDKLDQLFSQDK</sequence>
<accession>Q8EJW1</accession>
<evidence type="ECO:0000255" key="1">
    <source>
        <dbReference type="HAMAP-Rule" id="MF_01939"/>
    </source>
</evidence>
<evidence type="ECO:0000269" key="2">
    <source>
    </source>
</evidence>
<evidence type="ECO:0000303" key="3">
    <source>
    </source>
</evidence>
<organism>
    <name type="scientific">Shewanella oneidensis (strain ATCC 700550 / JCM 31522 / CIP 106686 / LMG 19005 / NCIMB 14063 / MR-1)</name>
    <dbReference type="NCBI Taxonomy" id="211586"/>
    <lineage>
        <taxon>Bacteria</taxon>
        <taxon>Pseudomonadati</taxon>
        <taxon>Pseudomonadota</taxon>
        <taxon>Gammaproteobacteria</taxon>
        <taxon>Alteromonadales</taxon>
        <taxon>Shewanellaceae</taxon>
        <taxon>Shewanella</taxon>
    </lineage>
</organism>